<name>PA2HB_AGKPI</name>
<evidence type="ECO:0000250" key="1">
    <source>
        <dbReference type="UniProtKB" id="I6L8L6"/>
    </source>
</evidence>
<evidence type="ECO:0000250" key="2">
    <source>
        <dbReference type="UniProtKB" id="P24605"/>
    </source>
</evidence>
<evidence type="ECO:0000250" key="3">
    <source>
        <dbReference type="UniProtKB" id="Q6JK69"/>
    </source>
</evidence>
<evidence type="ECO:0000269" key="4">
    <source>
    </source>
</evidence>
<evidence type="ECO:0000269" key="5">
    <source>
    </source>
</evidence>
<evidence type="ECO:0000269" key="6">
    <source>
    </source>
</evidence>
<evidence type="ECO:0000269" key="7">
    <source>
    </source>
</evidence>
<evidence type="ECO:0000303" key="8">
    <source>
    </source>
</evidence>
<evidence type="ECO:0000305" key="9"/>
<evidence type="ECO:0000305" key="10">
    <source>
    </source>
</evidence>
<evidence type="ECO:0000305" key="11">
    <source>
    </source>
</evidence>
<evidence type="ECO:0000312" key="12">
    <source>
        <dbReference type="PDB" id="1PPA"/>
    </source>
</evidence>
<evidence type="ECO:0007744" key="13">
    <source>
        <dbReference type="PDB" id="1PPA"/>
    </source>
</evidence>
<evidence type="ECO:0007829" key="14">
    <source>
        <dbReference type="PDB" id="1PPA"/>
    </source>
</evidence>
<comment type="function">
    <text evidence="1 3 4 6">Snake venom phospholipase A2 (PLA2) that lacks enzymatic activity (PubMed:1429612, PubMed:28633930). Displays edema-inducing activities (PubMed:1429612). Is myotoxic (By similarity). A model of myotoxic mechanism has been proposed: an apo Lys49-PLA2 is activated by the entrance of a hydrophobic molecule (e.g. fatty acid) at the hydrophobic channel of the protein leading to a reorientation of a monomer (By similarity). This reorientation causes a transition between 'inactive' to 'active' states, causing alignment of C-terminal and membrane-docking sites (MDoS) side-by-side and putting the membrane-disruption sites (MDiS) in the same plane, exposed to solvent and in a symmetric position for both monomers (By similarity). The MDoS region stabilizes the toxin on membrane by the interaction of charged residues with phospholipid head groups (By similarity). Subsequently, the MDiS region destabilizes the membrane with penetration of hydrophobic residues (By similarity). This insertion causes a disorganization of the membrane, allowing an uncontrolled influx of ions (i.e. calcium and sodium), and eventually triggering irreversible intracellular alterations and cell death (By similarity).</text>
</comment>
<comment type="subunit">
    <text evidence="6">Monomer.</text>
</comment>
<comment type="subcellular location">
    <subcellularLocation>
        <location evidence="6 7">Secreted</location>
    </subcellularLocation>
</comment>
<comment type="tissue specificity">
    <text evidence="10 11">Expressed by the venom gland.</text>
</comment>
<comment type="mass spectrometry"/>
<comment type="toxic dose">
    <text>LD(50) is 25 mg/kg by intravenous injection.</text>
</comment>
<comment type="similarity">
    <text evidence="9">Belongs to the phospholipase A2 family. Group II subfamily. K49 sub-subfamily.</text>
</comment>
<comment type="caution">
    <text evidence="9">Does not bind calcium as one of the calcium-binding sites is lost (Asp-&gt;Lys in position 48, which corresponds to 'Lys-49' in the current nomenclature).</text>
</comment>
<feature type="chain" id="PRO_0000161606" description="Basic phospholipase A2 homolog AppP2" evidence="6 7">
    <location>
        <begin position="1"/>
        <end position="121"/>
    </location>
</feature>
<feature type="region of interest" description="Important for membrane-damaging activities in eukaryotes and bacteria; heparin-binding" evidence="2">
    <location>
        <begin position="105"/>
        <end position="117"/>
    </location>
</feature>
<feature type="disulfide bond" evidence="5 13">
    <location>
        <begin position="26"/>
        <end position="115"/>
    </location>
</feature>
<feature type="disulfide bond" evidence="5 13">
    <location>
        <begin position="28"/>
        <end position="44"/>
    </location>
</feature>
<feature type="disulfide bond" evidence="5 13">
    <location>
        <begin position="43"/>
        <end position="95"/>
    </location>
</feature>
<feature type="disulfide bond" evidence="5 13">
    <location>
        <begin position="49"/>
        <end position="121"/>
    </location>
</feature>
<feature type="disulfide bond" evidence="5 13">
    <location>
        <begin position="50"/>
        <end position="88"/>
    </location>
</feature>
<feature type="disulfide bond" evidence="5 13">
    <location>
        <begin position="57"/>
        <end position="81"/>
    </location>
</feature>
<feature type="disulfide bond" evidence="5 13">
    <location>
        <begin position="75"/>
        <end position="86"/>
    </location>
</feature>
<feature type="helix" evidence="14">
    <location>
        <begin position="2"/>
        <end position="13"/>
    </location>
</feature>
<feature type="helix" evidence="14">
    <location>
        <begin position="17"/>
        <end position="21"/>
    </location>
</feature>
<feature type="turn" evidence="14">
    <location>
        <begin position="25"/>
        <end position="28"/>
    </location>
</feature>
<feature type="helix" evidence="14">
    <location>
        <begin position="39"/>
        <end position="51"/>
    </location>
</feature>
<feature type="turn" evidence="14">
    <location>
        <begin position="59"/>
        <end position="61"/>
    </location>
</feature>
<feature type="helix" evidence="14">
    <location>
        <begin position="80"/>
        <end position="98"/>
    </location>
</feature>
<feature type="helix" evidence="14">
    <location>
        <begin position="100"/>
        <end position="102"/>
    </location>
</feature>
<feature type="helix" evidence="14">
    <location>
        <begin position="105"/>
        <end position="107"/>
    </location>
</feature>
<feature type="strand" evidence="14">
    <location>
        <begin position="111"/>
        <end position="113"/>
    </location>
</feature>
<reference key="1">
    <citation type="journal article" date="1986" name="J. Biol. Chem.">
        <title>The lysine-49 phospholipase A2 from the venom of Agkistrodon piscivorus piscivorus. Relation of structure and function to other phospholipases A2.</title>
        <authorList>
            <person name="Maraganore J.M."/>
            <person name="Heinrikson R.L."/>
        </authorList>
    </citation>
    <scope>PROTEIN SEQUENCE</scope>
    <scope>SUBCELLULAR LOCATION</scope>
    <source>
        <tissue>Venom</tissue>
    </source>
</reference>
<reference key="2">
    <citation type="journal article" date="2017" name="Toxicon">
        <title>Phospholipase A2 in the venom of three cottonmouth snakes.</title>
        <authorList>
            <person name="Jia Y."/>
            <person name="Ermolinsky B."/>
            <person name="Garza A."/>
            <person name="Provenzano D."/>
        </authorList>
    </citation>
    <scope>PROTEIN SEQUENCE</scope>
    <scope>FUNCTION</scope>
    <scope>SUBUNIT</scope>
    <scope>SUBCELLULAR LOCATION</scope>
    <scope>MASS SPECTROMETRY</scope>
    <scope>IDENTIFICATION BY MASS SPECTROMETRY</scope>
    <source>
        <tissue>Venom</tissue>
    </source>
</reference>
<reference evidence="12" key="3">
    <citation type="journal article" date="1990" name="J. Biol. Chem.">
        <title>The crystal structure of a lysine 49 phospholipase A2 from the venom of the cottonmouth snake at 2.0-A resolution.</title>
        <authorList>
            <person name="Holland D.R."/>
            <person name="Clancy L.L."/>
            <person name="Muchmore S.W."/>
            <person name="Ryde T.J."/>
            <person name="Einspahr H.M."/>
            <person name="Finzel B.C."/>
            <person name="Heinrikson R.L."/>
            <person name="Watenpaugh K.D."/>
        </authorList>
    </citation>
    <scope>X-RAY CRYSTALLOGRAPHY (2.0 ANGSTROMS)</scope>
    <scope>DISULFIDE BOND</scope>
</reference>
<reference key="4">
    <citation type="journal article" date="1992" name="J. Biol. Chem.">
        <title>Crystallographic and biochemical studies of the (inactive) Lys-49 phospholipase A2 from the venom of Agkistridon piscivorus piscivorus.</title>
        <authorList>
            <person name="Scott D.L."/>
            <person name="Achari A."/>
            <person name="Vidal J.C."/>
            <person name="Sigler P.B."/>
        </authorList>
    </citation>
    <scope>X-RAY CRYSTALLOGRAPHY (2.5 ANGSTROMS)</scope>
    <scope>FUNCTION</scope>
</reference>
<organism>
    <name type="scientific">Agkistrodon piscivorus piscivorus</name>
    <name type="common">Eastern cottonmouth</name>
    <dbReference type="NCBI Taxonomy" id="8716"/>
    <lineage>
        <taxon>Eukaryota</taxon>
        <taxon>Metazoa</taxon>
        <taxon>Chordata</taxon>
        <taxon>Craniata</taxon>
        <taxon>Vertebrata</taxon>
        <taxon>Euteleostomi</taxon>
        <taxon>Lepidosauria</taxon>
        <taxon>Squamata</taxon>
        <taxon>Bifurcata</taxon>
        <taxon>Unidentata</taxon>
        <taxon>Episquamata</taxon>
        <taxon>Toxicofera</taxon>
        <taxon>Serpentes</taxon>
        <taxon>Colubroidea</taxon>
        <taxon>Viperidae</taxon>
        <taxon>Crotalinae</taxon>
        <taxon>Agkistrodon</taxon>
    </lineage>
</organism>
<proteinExistence type="evidence at protein level"/>
<accession>P04361</accession>
<protein>
    <recommendedName>
        <fullName evidence="8">Basic phospholipase A2 homolog AppP2</fullName>
        <shortName>svPLA2 homolog</shortName>
    </recommendedName>
    <alternativeName>
        <fullName evidence="8">APP-K49</fullName>
    </alternativeName>
</protein>
<dbReference type="PIR" id="A00767">
    <property type="entry name" value="PSSNAM"/>
</dbReference>
<dbReference type="PDB" id="1PPA">
    <property type="method" value="X-ray"/>
    <property type="resolution" value="2.00 A"/>
    <property type="chains" value="A=1-121"/>
</dbReference>
<dbReference type="PDBsum" id="1PPA"/>
<dbReference type="SMR" id="P04361"/>
<dbReference type="EvolutionaryTrace" id="P04361"/>
<dbReference type="GO" id="GO:0005576">
    <property type="term" value="C:extracellular region"/>
    <property type="evidence" value="ECO:0007669"/>
    <property type="project" value="UniProtKB-SubCell"/>
</dbReference>
<dbReference type="GO" id="GO:0005509">
    <property type="term" value="F:calcium ion binding"/>
    <property type="evidence" value="ECO:0007669"/>
    <property type="project" value="InterPro"/>
</dbReference>
<dbReference type="GO" id="GO:0047498">
    <property type="term" value="F:calcium-dependent phospholipase A2 activity"/>
    <property type="evidence" value="ECO:0007669"/>
    <property type="project" value="TreeGrafter"/>
</dbReference>
<dbReference type="GO" id="GO:0005543">
    <property type="term" value="F:phospholipid binding"/>
    <property type="evidence" value="ECO:0007669"/>
    <property type="project" value="TreeGrafter"/>
</dbReference>
<dbReference type="GO" id="GO:0090729">
    <property type="term" value="F:toxin activity"/>
    <property type="evidence" value="ECO:0007669"/>
    <property type="project" value="UniProtKB-KW"/>
</dbReference>
<dbReference type="GO" id="GO:0050482">
    <property type="term" value="P:arachidonate secretion"/>
    <property type="evidence" value="ECO:0007669"/>
    <property type="project" value="InterPro"/>
</dbReference>
<dbReference type="GO" id="GO:0016042">
    <property type="term" value="P:lipid catabolic process"/>
    <property type="evidence" value="ECO:0007669"/>
    <property type="project" value="InterPro"/>
</dbReference>
<dbReference type="GO" id="GO:0042130">
    <property type="term" value="P:negative regulation of T cell proliferation"/>
    <property type="evidence" value="ECO:0007669"/>
    <property type="project" value="TreeGrafter"/>
</dbReference>
<dbReference type="GO" id="GO:0006644">
    <property type="term" value="P:phospholipid metabolic process"/>
    <property type="evidence" value="ECO:0007669"/>
    <property type="project" value="InterPro"/>
</dbReference>
<dbReference type="CDD" id="cd00125">
    <property type="entry name" value="PLA2c"/>
    <property type="match status" value="1"/>
</dbReference>
<dbReference type="FunFam" id="1.20.90.10:FF:000001">
    <property type="entry name" value="Basic phospholipase A2 homolog"/>
    <property type="match status" value="1"/>
</dbReference>
<dbReference type="Gene3D" id="1.20.90.10">
    <property type="entry name" value="Phospholipase A2 domain"/>
    <property type="match status" value="1"/>
</dbReference>
<dbReference type="InterPro" id="IPR001211">
    <property type="entry name" value="PLipase_A2"/>
</dbReference>
<dbReference type="InterPro" id="IPR033112">
    <property type="entry name" value="PLipase_A2_Asp_AS"/>
</dbReference>
<dbReference type="InterPro" id="IPR016090">
    <property type="entry name" value="PLipase_A2_dom"/>
</dbReference>
<dbReference type="InterPro" id="IPR036444">
    <property type="entry name" value="PLipase_A2_dom_sf"/>
</dbReference>
<dbReference type="InterPro" id="IPR033113">
    <property type="entry name" value="PLipase_A2_His_AS"/>
</dbReference>
<dbReference type="PANTHER" id="PTHR11716">
    <property type="entry name" value="PHOSPHOLIPASE A2 FAMILY MEMBER"/>
    <property type="match status" value="1"/>
</dbReference>
<dbReference type="PANTHER" id="PTHR11716:SF9">
    <property type="entry name" value="PHOSPHOLIPASE A2, MEMBRANE ASSOCIATED"/>
    <property type="match status" value="1"/>
</dbReference>
<dbReference type="Pfam" id="PF00068">
    <property type="entry name" value="Phospholip_A2_1"/>
    <property type="match status" value="1"/>
</dbReference>
<dbReference type="PRINTS" id="PR00389">
    <property type="entry name" value="PHPHLIPASEA2"/>
</dbReference>
<dbReference type="SMART" id="SM00085">
    <property type="entry name" value="PA2c"/>
    <property type="match status" value="1"/>
</dbReference>
<dbReference type="SUPFAM" id="SSF48619">
    <property type="entry name" value="Phospholipase A2, PLA2"/>
    <property type="match status" value="1"/>
</dbReference>
<dbReference type="PROSITE" id="PS00119">
    <property type="entry name" value="PA2_ASP"/>
    <property type="match status" value="1"/>
</dbReference>
<dbReference type="PROSITE" id="PS00118">
    <property type="entry name" value="PA2_HIS"/>
    <property type="match status" value="1"/>
</dbReference>
<keyword id="KW-0002">3D-structure</keyword>
<keyword id="KW-0903">Direct protein sequencing</keyword>
<keyword id="KW-1015">Disulfide bond</keyword>
<keyword id="KW-0959">Myotoxin</keyword>
<keyword id="KW-0964">Secreted</keyword>
<keyword id="KW-0800">Toxin</keyword>
<sequence>SVLELGKMILQETGKNAITSYGSYGCNCGWGHRGQPKDATDRCCFVHKCCYKKLTDCNHKTDRYSYSWKNKAIICEEKNPCLKEMCECDKAVAICLRENLDTYNKKYKAYFKLKCKKPDTC</sequence>